<organism>
    <name type="scientific">Mus musculus</name>
    <name type="common">Mouse</name>
    <dbReference type="NCBI Taxonomy" id="10090"/>
    <lineage>
        <taxon>Eukaryota</taxon>
        <taxon>Metazoa</taxon>
        <taxon>Chordata</taxon>
        <taxon>Craniata</taxon>
        <taxon>Vertebrata</taxon>
        <taxon>Euteleostomi</taxon>
        <taxon>Mammalia</taxon>
        <taxon>Eutheria</taxon>
        <taxon>Euarchontoglires</taxon>
        <taxon>Glires</taxon>
        <taxon>Rodentia</taxon>
        <taxon>Myomorpha</taxon>
        <taxon>Muroidea</taxon>
        <taxon>Muridae</taxon>
        <taxon>Murinae</taxon>
        <taxon>Mus</taxon>
        <taxon>Mus</taxon>
    </lineage>
</organism>
<keyword id="KW-0158">Chromosome</keyword>
<keyword id="KW-0963">Cytoplasm</keyword>
<keyword id="KW-0488">Methylation</keyword>
<keyword id="KW-0539">Nucleus</keyword>
<keyword id="KW-0597">Phosphoprotein</keyword>
<keyword id="KW-1185">Reference proteome</keyword>
<comment type="function">
    <text evidence="1">Recruits the ubiquitination machinery to RNA polymerase II for polyubiquitination, removal and degradation, when the transcription-coupled nucleotide excision repair (TC-NER) machinery fails to resolve DNA damage. May promote the degradation of ANXA2.</text>
</comment>
<comment type="subunit">
    <text evidence="1">May interact with ANXA2.</text>
</comment>
<comment type="subcellular location">
    <subcellularLocation>
        <location evidence="1">Nucleus</location>
    </subcellularLocation>
    <subcellularLocation>
        <location evidence="1">Chromosome</location>
    </subcellularLocation>
    <subcellularLocation>
        <location evidence="1">Cytoplasm</location>
    </subcellularLocation>
    <text evidence="1">Associates with nuclear chromatin.</text>
</comment>
<sequence>MMTSVSNDRCRGAREKPQMPTAHAAQSQKQVVQATAEQMRLAQVIFDKNDSDFEAKVKQLMEVTGKNQDECIVALHDCNGDVNKAINILLEGNSDTTSWETVGGKKKNFGRESSENKENREKRTEREASRGRGTNNRKGRGGNRVREFKGEENGIDCSQGDKPAERGKRARGRGFGRGRGRGTGRFSAQSMGTFNPADYSESMSTDGCGTKLAVWEAAQNGTDEGPEGLAKSHSMSQEPPSKSSYGLKGAWKNSVEEWTTEDWTEDLSETKVFTASSAPAENHVTPGHSIDLVALLHKPAPPTQATEVNSFETSQQQGFGQALVFTNSQHNNQMAPGTANSTSASSYSPQSLSSVLGSGFGELPQSNMVNISNSQILDKLKPPGLSPFPAASSAQQNDTASPPATTAAWDLKPSAPQPSVLSRLDFKSQPEPSPVLSQLSQRQQHQTQAVSVPPPGLESFSSLAKPRESTAGDGPSTVSRLLQLPNMTVENIVSAHQPQPKHIKLPKRRVPPASKVPVSAVEMPGSSDVTGLNVQFGALEFGSEPSLSEFGSAASASENSNQIPISLYPKSLSEPLNASFPMTSAVQSSTYTTSVVTSSTLTSSALSSTSPVTTSSSYDQSSVHTRIAYQSSASPPDSAPGSVANGHGGGRSQHTVDTTSSVPAPKKTDPSALPSVSTLPGPASCTALLPSSAQHTATLPSLTPAAAELSSSPLSQLSSSLSGHQNSMTSAHATRSTSTPHTHASVESTASSAAFSAAATSAPSAPSSGVVLPGSMSTVSSLCLGGTTVSVPSSSTRATALVTSGKAPPNLPQGVPPLLHNQYLVGPGGLLPAYPIYGYDELQMLQSRLPMDYYGIPFAAPTALASRDGNLANNPYSGDVTKFGRGDSASPAPPTTPAQAQQSQSQTHHTAQQPFLNPGLPPGYSYTGLPYYTGVPSAFQYGPTMFVPPTSAKQHGVALSTPPTPFQQASGYGQHAYSTGYDDLTQGTAAGDYTKGGYGGSSQAPNKSTGSGPGKGVSVSSGTGLPDMTGSVYNKTQTFDKQGFHAGTPPPFSLPSALGSTGPLAPAAAPGYAPAPFLHIMPAHQQPHSQLLHHHLQQDAPSGSGQRSQPSSLQPKSQASKPTYGSAPYWTN</sequence>
<gene>
    <name evidence="7" type="primary">Ubap2</name>
    <name evidence="6" type="synonym">Lig1</name>
</gene>
<dbReference type="EMBL" id="AF276965">
    <property type="protein sequence ID" value="AAO23024.1"/>
    <property type="molecule type" value="mRNA"/>
</dbReference>
<dbReference type="EMBL" id="BC005482">
    <property type="protein sequence ID" value="AAH05482.1"/>
    <property type="molecule type" value="mRNA"/>
</dbReference>
<dbReference type="EMBL" id="BC007179">
    <property type="protein sequence ID" value="AAH07179.1"/>
    <property type="molecule type" value="mRNA"/>
</dbReference>
<dbReference type="CCDS" id="CCDS18058.1"/>
<dbReference type="RefSeq" id="NP_081148.1">
    <property type="nucleotide sequence ID" value="NM_026872.2"/>
</dbReference>
<dbReference type="RefSeq" id="XP_006538287.1">
    <property type="nucleotide sequence ID" value="XM_006538224.2"/>
</dbReference>
<dbReference type="SMR" id="Q91VX2"/>
<dbReference type="BioGRID" id="213121">
    <property type="interactions" value="10"/>
</dbReference>
<dbReference type="FunCoup" id="Q91VX2">
    <property type="interactions" value="4425"/>
</dbReference>
<dbReference type="IntAct" id="Q91VX2">
    <property type="interactions" value="2"/>
</dbReference>
<dbReference type="STRING" id="10090.ENSMUSP00000030143"/>
<dbReference type="GlyGen" id="Q91VX2">
    <property type="glycosylation" value="24 sites, 1 O-linked glycan (23 sites)"/>
</dbReference>
<dbReference type="iPTMnet" id="Q91VX2"/>
<dbReference type="PhosphoSitePlus" id="Q91VX2"/>
<dbReference type="SwissPalm" id="Q91VX2"/>
<dbReference type="jPOST" id="Q91VX2"/>
<dbReference type="PaxDb" id="10090-ENSMUSP00000030143"/>
<dbReference type="ProteomicsDB" id="297782"/>
<dbReference type="Pumba" id="Q91VX2"/>
<dbReference type="Antibodypedia" id="11067">
    <property type="antibodies" value="82 antibodies from 21 providers"/>
</dbReference>
<dbReference type="Ensembl" id="ENSMUST00000030143.13">
    <property type="protein sequence ID" value="ENSMUSP00000030143.7"/>
    <property type="gene ID" value="ENSMUSG00000028433.15"/>
</dbReference>
<dbReference type="GeneID" id="68926"/>
<dbReference type="KEGG" id="mmu:68926"/>
<dbReference type="UCSC" id="uc008sik.1">
    <property type="organism name" value="mouse"/>
</dbReference>
<dbReference type="AGR" id="MGI:1916176"/>
<dbReference type="CTD" id="55833"/>
<dbReference type="MGI" id="MGI:1916176">
    <property type="gene designation" value="Ubap2"/>
</dbReference>
<dbReference type="VEuPathDB" id="HostDB:ENSMUSG00000028433"/>
<dbReference type="eggNOG" id="ENOG502QPRH">
    <property type="taxonomic scope" value="Eukaryota"/>
</dbReference>
<dbReference type="GeneTree" id="ENSGT00390000003453"/>
<dbReference type="HOGENOM" id="CLU_009850_0_0_1"/>
<dbReference type="InParanoid" id="Q91VX2"/>
<dbReference type="OMA" id="SPSIDEC"/>
<dbReference type="OrthoDB" id="5918007at2759"/>
<dbReference type="PhylomeDB" id="Q91VX2"/>
<dbReference type="TreeFam" id="TF328468"/>
<dbReference type="BioGRID-ORCS" id="68926">
    <property type="hits" value="3 hits in 78 CRISPR screens"/>
</dbReference>
<dbReference type="ChiTaRS" id="Ubap2">
    <property type="organism name" value="mouse"/>
</dbReference>
<dbReference type="PRO" id="PR:Q91VX2"/>
<dbReference type="Proteomes" id="UP000000589">
    <property type="component" value="Chromosome 4"/>
</dbReference>
<dbReference type="RNAct" id="Q91VX2">
    <property type="molecule type" value="protein"/>
</dbReference>
<dbReference type="Bgee" id="ENSMUSG00000028433">
    <property type="expression patterns" value="Expressed in embryonic post-anal tail and 263 other cell types or tissues"/>
</dbReference>
<dbReference type="ExpressionAtlas" id="Q91VX2">
    <property type="expression patterns" value="baseline and differential"/>
</dbReference>
<dbReference type="GO" id="GO:0005694">
    <property type="term" value="C:chromosome"/>
    <property type="evidence" value="ECO:0007669"/>
    <property type="project" value="UniProtKB-SubCell"/>
</dbReference>
<dbReference type="GO" id="GO:0005737">
    <property type="term" value="C:cytoplasm"/>
    <property type="evidence" value="ECO:0007669"/>
    <property type="project" value="UniProtKB-SubCell"/>
</dbReference>
<dbReference type="GO" id="GO:0005634">
    <property type="term" value="C:nucleus"/>
    <property type="evidence" value="ECO:0007669"/>
    <property type="project" value="UniProtKB-SubCell"/>
</dbReference>
<dbReference type="CDD" id="cd14277">
    <property type="entry name" value="UBA_UBP2_like"/>
    <property type="match status" value="1"/>
</dbReference>
<dbReference type="FunFam" id="1.10.8.10:FF:000004">
    <property type="entry name" value="ubiquitin-associated protein 2-like isoform X1"/>
    <property type="match status" value="1"/>
</dbReference>
<dbReference type="Gene3D" id="1.10.8.10">
    <property type="entry name" value="DNA helicase RuvA subunit, C-terminal domain"/>
    <property type="match status" value="1"/>
</dbReference>
<dbReference type="InterPro" id="IPR051833">
    <property type="entry name" value="TC-DDR_regulator"/>
</dbReference>
<dbReference type="InterPro" id="IPR015940">
    <property type="entry name" value="UBA"/>
</dbReference>
<dbReference type="InterPro" id="IPR009060">
    <property type="entry name" value="UBA-like_sf"/>
</dbReference>
<dbReference type="InterPro" id="IPR022166">
    <property type="entry name" value="UBAP2/Lig"/>
</dbReference>
<dbReference type="PANTHER" id="PTHR16308">
    <property type="entry name" value="UBIQUITIN ASSOCIATED PROTEIN 2-LIKE/LINGERER"/>
    <property type="match status" value="1"/>
</dbReference>
<dbReference type="PANTHER" id="PTHR16308:SF19">
    <property type="entry name" value="UBIQUITIN-ASSOCIATED PROTEIN 2"/>
    <property type="match status" value="1"/>
</dbReference>
<dbReference type="Pfam" id="PF12478">
    <property type="entry name" value="UBAP2-Lig"/>
    <property type="match status" value="1"/>
</dbReference>
<dbReference type="SMART" id="SM00165">
    <property type="entry name" value="UBA"/>
    <property type="match status" value="1"/>
</dbReference>
<dbReference type="SUPFAM" id="SSF46934">
    <property type="entry name" value="UBA-like"/>
    <property type="match status" value="1"/>
</dbReference>
<name>UBAP2_MOUSE</name>
<protein>
    <recommendedName>
        <fullName>Ubiquitin-associated protein 2</fullName>
        <shortName>UBAP-2</shortName>
    </recommendedName>
    <alternativeName>
        <fullName>Protein lingerer homolog 1</fullName>
        <shortName>mLig-1</shortName>
    </alternativeName>
    <alternativeName>
        <fullName evidence="1">RNA polymerase II degradation factor Ubap2</fullName>
    </alternativeName>
</protein>
<reference evidence="6" key="1">
    <citation type="journal article" date="2002" name="Genetics">
        <title>Lingerer, a Drosophila gene involved in initiation and termination of copulation, encodes a set of novel cytoplasmic proteins.</title>
        <authorList>
            <person name="Kuniyoshi H."/>
            <person name="Baba K."/>
            <person name="Ueda R."/>
            <person name="Kondo S."/>
            <person name="Awano W."/>
            <person name="Juni N."/>
            <person name="Yamamoto D."/>
        </authorList>
    </citation>
    <scope>NUCLEOTIDE SEQUENCE [MRNA]</scope>
</reference>
<reference evidence="5" key="2">
    <citation type="journal article" date="2004" name="Genome Res.">
        <title>The status, quality, and expansion of the NIH full-length cDNA project: the Mammalian Gene Collection (MGC).</title>
        <authorList>
            <consortium name="The MGC Project Team"/>
        </authorList>
    </citation>
    <scope>NUCLEOTIDE SEQUENCE [LARGE SCALE MRNA]</scope>
    <source>
        <tissue evidence="5">Mammary gland</tissue>
    </source>
</reference>
<reference key="3">
    <citation type="journal article" date="2005" name="Nat. Biotechnol.">
        <title>Immunoaffinity profiling of tyrosine phosphorylation in cancer cells.</title>
        <authorList>
            <person name="Rush J."/>
            <person name="Moritz A."/>
            <person name="Lee K.A."/>
            <person name="Guo A."/>
            <person name="Goss V.L."/>
            <person name="Spek E.J."/>
            <person name="Zhang H."/>
            <person name="Zha X.-M."/>
            <person name="Polakiewicz R.D."/>
            <person name="Comb M.J."/>
        </authorList>
    </citation>
    <scope>IDENTIFICATION BY MASS SPECTROMETRY [LARGE SCALE ANALYSIS]</scope>
</reference>
<reference key="4">
    <citation type="journal article" date="2009" name="Immunity">
        <title>The phagosomal proteome in interferon-gamma-activated macrophages.</title>
        <authorList>
            <person name="Trost M."/>
            <person name="English L."/>
            <person name="Lemieux S."/>
            <person name="Courcelles M."/>
            <person name="Desjardins M."/>
            <person name="Thibault P."/>
        </authorList>
    </citation>
    <scope>IDENTIFICATION BY MASS SPECTROMETRY [LARGE SCALE ANALYSIS]</scope>
</reference>
<reference key="5">
    <citation type="journal article" date="2010" name="Cell">
        <title>A tissue-specific atlas of mouse protein phosphorylation and expression.</title>
        <authorList>
            <person name="Huttlin E.L."/>
            <person name="Jedrychowski M.P."/>
            <person name="Elias J.E."/>
            <person name="Goswami T."/>
            <person name="Rad R."/>
            <person name="Beausoleil S.A."/>
            <person name="Villen J."/>
            <person name="Haas W."/>
            <person name="Sowa M.E."/>
            <person name="Gygi S.P."/>
        </authorList>
    </citation>
    <scope>IDENTIFICATION BY MASS SPECTROMETRY [LARGE SCALE ANALYSIS]</scope>
    <source>
        <tissue>Brain</tissue>
        <tissue>Heart</tissue>
        <tissue>Liver</tissue>
        <tissue>Lung</tissue>
        <tissue>Pancreas</tissue>
        <tissue>Spleen</tissue>
        <tissue>Testis</tissue>
    </source>
</reference>
<proteinExistence type="evidence at protein level"/>
<accession>Q91VX2</accession>
<accession>Q812D6</accession>
<accession>Q99K40</accession>
<feature type="chain" id="PRO_0000270982" description="Ubiquitin-associated protein 2">
    <location>
        <begin position="1"/>
        <end position="1132"/>
    </location>
</feature>
<feature type="domain" description="UBA" evidence="2">
    <location>
        <begin position="48"/>
        <end position="92"/>
    </location>
</feature>
<feature type="region of interest" description="Disordered" evidence="3">
    <location>
        <begin position="1"/>
        <end position="29"/>
    </location>
</feature>
<feature type="region of interest" description="Disordered" evidence="3">
    <location>
        <begin position="95"/>
        <end position="202"/>
    </location>
</feature>
<feature type="region of interest" description="Disordered" evidence="3">
    <location>
        <begin position="221"/>
        <end position="248"/>
    </location>
</feature>
<feature type="region of interest" description="Disordered" evidence="3">
    <location>
        <begin position="331"/>
        <end position="351"/>
    </location>
</feature>
<feature type="region of interest" description="Disordered" evidence="3">
    <location>
        <begin position="380"/>
        <end position="479"/>
    </location>
</feature>
<feature type="region of interest" description="Disordered" evidence="3">
    <location>
        <begin position="602"/>
        <end position="679"/>
    </location>
</feature>
<feature type="region of interest" description="Disordered" evidence="3">
    <location>
        <begin position="713"/>
        <end position="749"/>
    </location>
</feature>
<feature type="region of interest" description="Disordered" evidence="3">
    <location>
        <begin position="875"/>
        <end position="919"/>
    </location>
</feature>
<feature type="region of interest" description="Disordered" evidence="3">
    <location>
        <begin position="996"/>
        <end position="1033"/>
    </location>
</feature>
<feature type="region of interest" description="Disordered" evidence="3">
    <location>
        <begin position="1040"/>
        <end position="1059"/>
    </location>
</feature>
<feature type="region of interest" description="Disordered" evidence="3">
    <location>
        <begin position="1087"/>
        <end position="1132"/>
    </location>
</feature>
<feature type="compositionally biased region" description="Basic and acidic residues" evidence="3">
    <location>
        <begin position="8"/>
        <end position="17"/>
    </location>
</feature>
<feature type="compositionally biased region" description="Basic and acidic residues" evidence="3">
    <location>
        <begin position="109"/>
        <end position="130"/>
    </location>
</feature>
<feature type="compositionally biased region" description="Basic residues" evidence="3">
    <location>
        <begin position="168"/>
        <end position="182"/>
    </location>
</feature>
<feature type="compositionally biased region" description="Polar residues" evidence="3">
    <location>
        <begin position="233"/>
        <end position="244"/>
    </location>
</feature>
<feature type="compositionally biased region" description="Polar residues" evidence="3">
    <location>
        <begin position="331"/>
        <end position="340"/>
    </location>
</feature>
<feature type="compositionally biased region" description="Low complexity" evidence="3">
    <location>
        <begin position="341"/>
        <end position="351"/>
    </location>
</feature>
<feature type="compositionally biased region" description="Polar residues" evidence="3">
    <location>
        <begin position="392"/>
        <end position="404"/>
    </location>
</feature>
<feature type="compositionally biased region" description="Low complexity" evidence="3">
    <location>
        <begin position="436"/>
        <end position="448"/>
    </location>
</feature>
<feature type="compositionally biased region" description="Low complexity" evidence="3">
    <location>
        <begin position="602"/>
        <end position="618"/>
    </location>
</feature>
<feature type="compositionally biased region" description="Polar residues" evidence="3">
    <location>
        <begin position="619"/>
        <end position="630"/>
    </location>
</feature>
<feature type="compositionally biased region" description="Low complexity" evidence="3">
    <location>
        <begin position="631"/>
        <end position="644"/>
    </location>
</feature>
<feature type="compositionally biased region" description="Polar residues" evidence="3">
    <location>
        <begin position="652"/>
        <end position="662"/>
    </location>
</feature>
<feature type="compositionally biased region" description="Low complexity" evidence="3">
    <location>
        <begin position="713"/>
        <end position="722"/>
    </location>
</feature>
<feature type="compositionally biased region" description="Polar residues" evidence="3">
    <location>
        <begin position="723"/>
        <end position="742"/>
    </location>
</feature>
<feature type="compositionally biased region" description="Low complexity" evidence="3">
    <location>
        <begin position="897"/>
        <end position="914"/>
    </location>
</feature>
<feature type="compositionally biased region" description="Low complexity" evidence="3">
    <location>
        <begin position="1101"/>
        <end position="1115"/>
    </location>
</feature>
<feature type="compositionally biased region" description="Polar residues" evidence="3">
    <location>
        <begin position="1116"/>
        <end position="1132"/>
    </location>
</feature>
<feature type="modified residue" description="Omega-N-methylarginine" evidence="1">
    <location>
        <position position="166"/>
    </location>
</feature>
<feature type="modified residue" description="Phosphoserine" evidence="1">
    <location>
        <position position="433"/>
    </location>
</feature>
<feature type="modified residue" description="Phosphoserine" evidence="1">
    <location>
        <position position="440"/>
    </location>
</feature>
<feature type="modified residue" description="Phosphoserine" evidence="1">
    <location>
        <position position="631"/>
    </location>
</feature>
<feature type="sequence conflict" description="In Ref. 1; AAO23024." evidence="4" ref="1">
    <original>T</original>
    <variation>A</variation>
    <location>
        <position position="698"/>
    </location>
</feature>
<evidence type="ECO:0000250" key="1">
    <source>
        <dbReference type="UniProtKB" id="Q5T6F2"/>
    </source>
</evidence>
<evidence type="ECO:0000255" key="2"/>
<evidence type="ECO:0000256" key="3">
    <source>
        <dbReference type="SAM" id="MobiDB-lite"/>
    </source>
</evidence>
<evidence type="ECO:0000305" key="4"/>
<evidence type="ECO:0000312" key="5">
    <source>
        <dbReference type="EMBL" id="AAH07179.1"/>
    </source>
</evidence>
<evidence type="ECO:0000312" key="6">
    <source>
        <dbReference type="EMBL" id="AAO23024.1"/>
    </source>
</evidence>
<evidence type="ECO:0000312" key="7">
    <source>
        <dbReference type="MGI" id="MGI:1916176"/>
    </source>
</evidence>